<gene>
    <name evidence="1" type="primary">pgk2</name>
    <name type="ordered locus">MmarC6_1242</name>
</gene>
<feature type="chain" id="PRO_1000200697" description="2-phosphoglycerate kinase">
    <location>
        <begin position="1"/>
        <end position="313"/>
    </location>
</feature>
<feature type="domain" description="ATP-cone" evidence="1">
    <location>
        <begin position="8"/>
        <end position="95"/>
    </location>
</feature>
<comment type="function">
    <text evidence="1">Catalyzes the phosphorylation of 2-phosphoglycerate to 2,3-diphosphoglycerate. Involved in the biosynthesis of cyclic 2,3-bisphosphoglycerate, a thermoprotectant.</text>
</comment>
<comment type="catalytic activity">
    <reaction evidence="1">
        <text>(2R)-2-phosphoglycerate + ATP = (2R)-2,3-bisphosphoglycerate + ADP + H(+)</text>
        <dbReference type="Rhea" id="RHEA:42408"/>
        <dbReference type="ChEBI" id="CHEBI:15378"/>
        <dbReference type="ChEBI" id="CHEBI:30616"/>
        <dbReference type="ChEBI" id="CHEBI:58248"/>
        <dbReference type="ChEBI" id="CHEBI:58289"/>
        <dbReference type="ChEBI" id="CHEBI:456216"/>
        <dbReference type="EC" id="2.7.2.16"/>
    </reaction>
</comment>
<comment type="cofactor">
    <cofactor evidence="1">
        <name>a divalent metal cation</name>
        <dbReference type="ChEBI" id="CHEBI:60240"/>
    </cofactor>
</comment>
<comment type="pathway">
    <text evidence="1">Thermoadapter biosynthesis; cyclic 2,3-diphosphoglycerate biosynthesis; cyclic 2,3-diphosphoglycerate from 2-phospho-D-glycerate: step 1/2.</text>
</comment>
<comment type="similarity">
    <text evidence="1">Belongs to the 2-phosphoglycerate kinase family.</text>
</comment>
<accession>A9A9N2</accession>
<keyword id="KW-0067">ATP-binding</keyword>
<keyword id="KW-0418">Kinase</keyword>
<keyword id="KW-0547">Nucleotide-binding</keyword>
<keyword id="KW-0808">Transferase</keyword>
<sequence length="313" mass="35879">MTFDENISRILVTDKEYDMPFSKGLLARSLSAAGMKPSESYTLAREIERDLNEQNVLKISKDELRRRVYYTLINRDYEGIGEKYLLWRRVLKKHSIIILVGGSSGVGTSTIAFELASRLGIPSVIGTDSIREVMRRSISKDLVPMLYESSYTAWTALRRSPWDEQDTKEMHLLGFERHVEPVLLGIESIIDRSLTEGTSVILEGTHIVPGLMGEKYHSMPNVIFLNLTLSSEETHKKRFTARAKVSDRPLERYLENFEIIKEINQYIVEKSKENNVPVIENVSISETVQKCLEIVTERFSNLNDEPIIDSDIY</sequence>
<name>PGK2_METM6</name>
<proteinExistence type="inferred from homology"/>
<dbReference type="EC" id="2.7.2.16" evidence="1"/>
<dbReference type="EMBL" id="CP000867">
    <property type="protein sequence ID" value="ABX02055.1"/>
    <property type="molecule type" value="Genomic_DNA"/>
</dbReference>
<dbReference type="STRING" id="444158.MmarC6_1242"/>
<dbReference type="KEGG" id="mmx:MmarC6_1242"/>
<dbReference type="eggNOG" id="arCOG01967">
    <property type="taxonomic scope" value="Archaea"/>
</dbReference>
<dbReference type="HOGENOM" id="CLU_848909_0_0_2"/>
<dbReference type="OrthoDB" id="358692at2157"/>
<dbReference type="PhylomeDB" id="A9A9N2"/>
<dbReference type="UniPathway" id="UPA00551">
    <property type="reaction ID" value="UER00609"/>
</dbReference>
<dbReference type="GO" id="GO:0005524">
    <property type="term" value="F:ATP binding"/>
    <property type="evidence" value="ECO:0007669"/>
    <property type="project" value="UniProtKB-KW"/>
</dbReference>
<dbReference type="GO" id="GO:0016301">
    <property type="term" value="F:kinase activity"/>
    <property type="evidence" value="ECO:0007669"/>
    <property type="project" value="UniProtKB-KW"/>
</dbReference>
<dbReference type="GO" id="GO:0016774">
    <property type="term" value="F:phosphotransferase activity, carboxyl group as acceptor"/>
    <property type="evidence" value="ECO:0007669"/>
    <property type="project" value="UniProtKB-UniRule"/>
</dbReference>
<dbReference type="Gene3D" id="3.40.50.300">
    <property type="entry name" value="P-loop containing nucleotide triphosphate hydrolases"/>
    <property type="match status" value="1"/>
</dbReference>
<dbReference type="HAMAP" id="MF_00769">
    <property type="entry name" value="2PGK"/>
    <property type="match status" value="1"/>
</dbReference>
<dbReference type="InterPro" id="IPR020872">
    <property type="entry name" value="2PKG"/>
</dbReference>
<dbReference type="InterPro" id="IPR005144">
    <property type="entry name" value="ATP-cone_dom"/>
</dbReference>
<dbReference type="InterPro" id="IPR027417">
    <property type="entry name" value="P-loop_NTPase"/>
</dbReference>
<dbReference type="NCBIfam" id="NF003259">
    <property type="entry name" value="PRK04220.1"/>
    <property type="match status" value="1"/>
</dbReference>
<dbReference type="PANTHER" id="PTHR33477">
    <property type="entry name" value="P-LOOP NTPASE DOMAIN-CONTAINING PROTEIN LPA1 HOMOLOG 1"/>
    <property type="match status" value="1"/>
</dbReference>
<dbReference type="PANTHER" id="PTHR33477:SF3">
    <property type="entry name" value="P-LOOP NTPASE DOMAIN-CONTAINING PROTEIN LPA1 HOMOLOG 1"/>
    <property type="match status" value="1"/>
</dbReference>
<dbReference type="Pfam" id="PF03477">
    <property type="entry name" value="ATP-cone"/>
    <property type="match status" value="1"/>
</dbReference>
<dbReference type="SUPFAM" id="SSF52540">
    <property type="entry name" value="P-loop containing nucleoside triphosphate hydrolases"/>
    <property type="match status" value="1"/>
</dbReference>
<dbReference type="PROSITE" id="PS51161">
    <property type="entry name" value="ATP_CONE"/>
    <property type="match status" value="1"/>
</dbReference>
<evidence type="ECO:0000255" key="1">
    <source>
        <dbReference type="HAMAP-Rule" id="MF_00769"/>
    </source>
</evidence>
<organism>
    <name type="scientific">Methanococcus maripaludis (strain C6 / ATCC BAA-1332)</name>
    <dbReference type="NCBI Taxonomy" id="444158"/>
    <lineage>
        <taxon>Archaea</taxon>
        <taxon>Methanobacteriati</taxon>
        <taxon>Methanobacteriota</taxon>
        <taxon>Methanomada group</taxon>
        <taxon>Methanococci</taxon>
        <taxon>Methanococcales</taxon>
        <taxon>Methanococcaceae</taxon>
        <taxon>Methanococcus</taxon>
    </lineage>
</organism>
<reference key="1">
    <citation type="submission" date="2007-10" db="EMBL/GenBank/DDBJ databases">
        <title>Complete sequence of Methanococcus maripaludis C6.</title>
        <authorList>
            <consortium name="US DOE Joint Genome Institute"/>
            <person name="Copeland A."/>
            <person name="Lucas S."/>
            <person name="Lapidus A."/>
            <person name="Barry K."/>
            <person name="Glavina del Rio T."/>
            <person name="Dalin E."/>
            <person name="Tice H."/>
            <person name="Pitluck S."/>
            <person name="Clum A."/>
            <person name="Schmutz J."/>
            <person name="Larimer F."/>
            <person name="Land M."/>
            <person name="Hauser L."/>
            <person name="Kyrpides N."/>
            <person name="Mikhailova N."/>
            <person name="Sieprawska-Lupa M."/>
            <person name="Whitman W.B."/>
            <person name="Richardson P."/>
        </authorList>
    </citation>
    <scope>NUCLEOTIDE SEQUENCE [LARGE SCALE GENOMIC DNA]</scope>
    <source>
        <strain>C6 / ATCC BAA-1332</strain>
    </source>
</reference>
<protein>
    <recommendedName>
        <fullName evidence="1">2-phosphoglycerate kinase</fullName>
        <shortName evidence="1">2PGK</shortName>
        <ecNumber evidence="1">2.7.2.16</ecNumber>
    </recommendedName>
</protein>